<feature type="chain" id="PRO_1000116010" description="Probable GTP-binding protein EngB">
    <location>
        <begin position="1"/>
        <end position="192"/>
    </location>
</feature>
<feature type="domain" description="EngB-type G" evidence="1">
    <location>
        <begin position="22"/>
        <end position="192"/>
    </location>
</feature>
<feature type="binding site" evidence="1">
    <location>
        <begin position="30"/>
        <end position="37"/>
    </location>
    <ligand>
        <name>GTP</name>
        <dbReference type="ChEBI" id="CHEBI:37565"/>
    </ligand>
</feature>
<feature type="binding site" evidence="1">
    <location>
        <position position="37"/>
    </location>
    <ligand>
        <name>Mg(2+)</name>
        <dbReference type="ChEBI" id="CHEBI:18420"/>
    </ligand>
</feature>
<feature type="binding site" evidence="1">
    <location>
        <begin position="57"/>
        <end position="61"/>
    </location>
    <ligand>
        <name>GTP</name>
        <dbReference type="ChEBI" id="CHEBI:37565"/>
    </ligand>
</feature>
<feature type="binding site" evidence="1">
    <location>
        <position position="59"/>
    </location>
    <ligand>
        <name>Mg(2+)</name>
        <dbReference type="ChEBI" id="CHEBI:18420"/>
    </ligand>
</feature>
<feature type="binding site" evidence="1">
    <location>
        <begin position="75"/>
        <end position="78"/>
    </location>
    <ligand>
        <name>GTP</name>
        <dbReference type="ChEBI" id="CHEBI:37565"/>
    </ligand>
</feature>
<feature type="binding site" evidence="1">
    <location>
        <begin position="142"/>
        <end position="145"/>
    </location>
    <ligand>
        <name>GTP</name>
        <dbReference type="ChEBI" id="CHEBI:37565"/>
    </ligand>
</feature>
<feature type="binding site" evidence="1">
    <location>
        <begin position="173"/>
        <end position="175"/>
    </location>
    <ligand>
        <name>GTP</name>
        <dbReference type="ChEBI" id="CHEBI:37565"/>
    </ligand>
</feature>
<gene>
    <name evidence="1" type="primary">engB</name>
    <name type="ordered locus">Teth39_1648</name>
</gene>
<name>ENGB_THEP3</name>
<proteinExistence type="inferred from homology"/>
<keyword id="KW-0131">Cell cycle</keyword>
<keyword id="KW-0132">Cell division</keyword>
<keyword id="KW-0342">GTP-binding</keyword>
<keyword id="KW-0460">Magnesium</keyword>
<keyword id="KW-0479">Metal-binding</keyword>
<keyword id="KW-0547">Nucleotide-binding</keyword>
<keyword id="KW-1185">Reference proteome</keyword>
<keyword id="KW-0717">Septation</keyword>
<accession>B0KBA1</accession>
<evidence type="ECO:0000255" key="1">
    <source>
        <dbReference type="HAMAP-Rule" id="MF_00321"/>
    </source>
</evidence>
<dbReference type="EMBL" id="CP000924">
    <property type="protein sequence ID" value="ABY95289.1"/>
    <property type="molecule type" value="Genomic_DNA"/>
</dbReference>
<dbReference type="SMR" id="B0KBA1"/>
<dbReference type="STRING" id="340099.Teth39_1648"/>
<dbReference type="KEGG" id="tpd:Teth39_1648"/>
<dbReference type="eggNOG" id="COG0218">
    <property type="taxonomic scope" value="Bacteria"/>
</dbReference>
<dbReference type="HOGENOM" id="CLU_033732_3_0_9"/>
<dbReference type="Proteomes" id="UP000002156">
    <property type="component" value="Chromosome"/>
</dbReference>
<dbReference type="GO" id="GO:0005829">
    <property type="term" value="C:cytosol"/>
    <property type="evidence" value="ECO:0007669"/>
    <property type="project" value="TreeGrafter"/>
</dbReference>
<dbReference type="GO" id="GO:0005525">
    <property type="term" value="F:GTP binding"/>
    <property type="evidence" value="ECO:0007669"/>
    <property type="project" value="UniProtKB-UniRule"/>
</dbReference>
<dbReference type="GO" id="GO:0046872">
    <property type="term" value="F:metal ion binding"/>
    <property type="evidence" value="ECO:0007669"/>
    <property type="project" value="UniProtKB-KW"/>
</dbReference>
<dbReference type="GO" id="GO:0000917">
    <property type="term" value="P:division septum assembly"/>
    <property type="evidence" value="ECO:0007669"/>
    <property type="project" value="UniProtKB-KW"/>
</dbReference>
<dbReference type="CDD" id="cd01876">
    <property type="entry name" value="YihA_EngB"/>
    <property type="match status" value="1"/>
</dbReference>
<dbReference type="FunFam" id="3.40.50.300:FF:000098">
    <property type="entry name" value="Probable GTP-binding protein EngB"/>
    <property type="match status" value="1"/>
</dbReference>
<dbReference type="Gene3D" id="3.40.50.300">
    <property type="entry name" value="P-loop containing nucleotide triphosphate hydrolases"/>
    <property type="match status" value="1"/>
</dbReference>
<dbReference type="HAMAP" id="MF_00321">
    <property type="entry name" value="GTPase_EngB"/>
    <property type="match status" value="1"/>
</dbReference>
<dbReference type="InterPro" id="IPR030393">
    <property type="entry name" value="G_ENGB_dom"/>
</dbReference>
<dbReference type="InterPro" id="IPR006073">
    <property type="entry name" value="GTP-bd"/>
</dbReference>
<dbReference type="InterPro" id="IPR019987">
    <property type="entry name" value="GTP-bd_ribosome_bio_YsxC"/>
</dbReference>
<dbReference type="InterPro" id="IPR027417">
    <property type="entry name" value="P-loop_NTPase"/>
</dbReference>
<dbReference type="InterPro" id="IPR005225">
    <property type="entry name" value="Small_GTP-bd"/>
</dbReference>
<dbReference type="NCBIfam" id="TIGR03598">
    <property type="entry name" value="GTPase_YsxC"/>
    <property type="match status" value="1"/>
</dbReference>
<dbReference type="NCBIfam" id="TIGR00231">
    <property type="entry name" value="small_GTP"/>
    <property type="match status" value="1"/>
</dbReference>
<dbReference type="PANTHER" id="PTHR11649:SF13">
    <property type="entry name" value="ENGB-TYPE G DOMAIN-CONTAINING PROTEIN"/>
    <property type="match status" value="1"/>
</dbReference>
<dbReference type="PANTHER" id="PTHR11649">
    <property type="entry name" value="MSS1/TRME-RELATED GTP-BINDING PROTEIN"/>
    <property type="match status" value="1"/>
</dbReference>
<dbReference type="Pfam" id="PF01926">
    <property type="entry name" value="MMR_HSR1"/>
    <property type="match status" value="1"/>
</dbReference>
<dbReference type="SUPFAM" id="SSF52540">
    <property type="entry name" value="P-loop containing nucleoside triphosphate hydrolases"/>
    <property type="match status" value="1"/>
</dbReference>
<dbReference type="PROSITE" id="PS51706">
    <property type="entry name" value="G_ENGB"/>
    <property type="match status" value="1"/>
</dbReference>
<sequence length="192" mass="22236">MKIKTVEFARSAFNEEQYPKDNLPQIVIVGRSNVGKSTLINTVLNRKNLAKTSSRPGKTRGINFYLINNKFYLVDLPGYGYAKVSKEMKKQWAHNIETFLNTSQNLRHGLFLIDIRRNPTEDDFLMINWFKHKNLPFTVVLTKADKVNKSESRKAVEDICKIFKINREEVIIFSALEKMGVSQVLSIFEKYA</sequence>
<comment type="function">
    <text evidence="1">Necessary for normal cell division and for the maintenance of normal septation.</text>
</comment>
<comment type="cofactor">
    <cofactor evidence="1">
        <name>Mg(2+)</name>
        <dbReference type="ChEBI" id="CHEBI:18420"/>
    </cofactor>
</comment>
<comment type="similarity">
    <text evidence="1">Belongs to the TRAFAC class TrmE-Era-EngA-EngB-Septin-like GTPase superfamily. EngB GTPase family.</text>
</comment>
<protein>
    <recommendedName>
        <fullName evidence="1">Probable GTP-binding protein EngB</fullName>
    </recommendedName>
</protein>
<reference key="1">
    <citation type="submission" date="2008-01" db="EMBL/GenBank/DDBJ databases">
        <title>Complete sequence of Thermoanaerobacter pseudethanolicus 39E.</title>
        <authorList>
            <person name="Copeland A."/>
            <person name="Lucas S."/>
            <person name="Lapidus A."/>
            <person name="Barry K."/>
            <person name="Glavina del Rio T."/>
            <person name="Dalin E."/>
            <person name="Tice H."/>
            <person name="Pitluck S."/>
            <person name="Bruce D."/>
            <person name="Goodwin L."/>
            <person name="Saunders E."/>
            <person name="Brettin T."/>
            <person name="Detter J.C."/>
            <person name="Han C."/>
            <person name="Schmutz J."/>
            <person name="Larimer F."/>
            <person name="Land M."/>
            <person name="Hauser L."/>
            <person name="Kyrpides N."/>
            <person name="Lykidis A."/>
            <person name="Hemme C."/>
            <person name="Fields M.W."/>
            <person name="He Z."/>
            <person name="Zhou J."/>
            <person name="Richardson P."/>
        </authorList>
    </citation>
    <scope>NUCLEOTIDE SEQUENCE [LARGE SCALE GENOMIC DNA]</scope>
    <source>
        <strain>ATCC 33223 / DSM 2355 / 39E</strain>
    </source>
</reference>
<organism>
    <name type="scientific">Thermoanaerobacter pseudethanolicus (strain ATCC 33223 / 39E)</name>
    <name type="common">Clostridium thermohydrosulfuricum</name>
    <dbReference type="NCBI Taxonomy" id="340099"/>
    <lineage>
        <taxon>Bacteria</taxon>
        <taxon>Bacillati</taxon>
        <taxon>Bacillota</taxon>
        <taxon>Clostridia</taxon>
        <taxon>Thermoanaerobacterales</taxon>
        <taxon>Thermoanaerobacteraceae</taxon>
        <taxon>Thermoanaerobacter</taxon>
    </lineage>
</organism>